<keyword id="KW-1003">Cell membrane</keyword>
<keyword id="KW-0449">Lipoprotein</keyword>
<keyword id="KW-0472">Membrane</keyword>
<keyword id="KW-0564">Palmitate</keyword>
<keyword id="KW-0732">Signal</keyword>
<sequence>MEYLKRLALFISVIILTIFIMGCDSQSDTAENPKEGSKEAQIKKSFSKTLDMYPIKNLEDLYDKEGYRDGEFKKGDKGTWTISTDFAKSNKPGEMDSEGMVLHLNRNMRTATGHYTIRTTYDELGKMTREKNYRVELKNNKIVVLDKVEDVNLKHKIENFKFFSQYADFKDLKNYKNGRISINENVPYYEAEYKRNNSDGNVKKLREKYPITTKQSPILKLHIDGDIKGSSVGYKQIEYMFSKEKEDETFMSDFLNFGPSHSN</sequence>
<proteinExistence type="inferred from homology"/>
<gene>
    <name type="primary">lpl12</name>
    <name type="ordered locus">MW0399</name>
</gene>
<name>Y399_STAAW</name>
<reference key="1">
    <citation type="journal article" date="2002" name="Lancet">
        <title>Genome and virulence determinants of high virulence community-acquired MRSA.</title>
        <authorList>
            <person name="Baba T."/>
            <person name="Takeuchi F."/>
            <person name="Kuroda M."/>
            <person name="Yuzawa H."/>
            <person name="Aoki K."/>
            <person name="Oguchi A."/>
            <person name="Nagai Y."/>
            <person name="Iwama N."/>
            <person name="Asano K."/>
            <person name="Naimi T."/>
            <person name="Kuroda H."/>
            <person name="Cui L."/>
            <person name="Yamamoto K."/>
            <person name="Hiramatsu K."/>
        </authorList>
    </citation>
    <scope>NUCLEOTIDE SEQUENCE [LARGE SCALE GENOMIC DNA]</scope>
    <source>
        <strain>MW2</strain>
    </source>
</reference>
<organism>
    <name type="scientific">Staphylococcus aureus (strain MW2)</name>
    <dbReference type="NCBI Taxonomy" id="196620"/>
    <lineage>
        <taxon>Bacteria</taxon>
        <taxon>Bacillati</taxon>
        <taxon>Bacillota</taxon>
        <taxon>Bacilli</taxon>
        <taxon>Bacillales</taxon>
        <taxon>Staphylococcaceae</taxon>
        <taxon>Staphylococcus</taxon>
    </lineage>
</organism>
<dbReference type="EMBL" id="BA000033">
    <property type="protein sequence ID" value="BAB94264.1"/>
    <property type="molecule type" value="Genomic_DNA"/>
</dbReference>
<dbReference type="RefSeq" id="WP_000456136.1">
    <property type="nucleotide sequence ID" value="NC_003923.1"/>
</dbReference>
<dbReference type="SMR" id="Q8NY37"/>
<dbReference type="KEGG" id="sam:MW0399"/>
<dbReference type="HOGENOM" id="CLU_071589_0_1_9"/>
<dbReference type="GO" id="GO:0005886">
    <property type="term" value="C:plasma membrane"/>
    <property type="evidence" value="ECO:0007669"/>
    <property type="project" value="UniProtKB-SubCell"/>
</dbReference>
<dbReference type="Gene3D" id="2.50.20.40">
    <property type="match status" value="1"/>
</dbReference>
<dbReference type="InterPro" id="IPR007595">
    <property type="entry name" value="Csa"/>
</dbReference>
<dbReference type="InterPro" id="IPR038641">
    <property type="entry name" value="Csa_sf"/>
</dbReference>
<dbReference type="NCBIfam" id="TIGR01742">
    <property type="entry name" value="SA_tandem_lipo"/>
    <property type="match status" value="1"/>
</dbReference>
<dbReference type="Pfam" id="PF04507">
    <property type="entry name" value="DUF576"/>
    <property type="match status" value="1"/>
</dbReference>
<dbReference type="PROSITE" id="PS51257">
    <property type="entry name" value="PROKAR_LIPOPROTEIN"/>
    <property type="match status" value="1"/>
</dbReference>
<accession>Q8NY37</accession>
<protein>
    <recommendedName>
        <fullName>Uncharacterized lipoprotein MW0399</fullName>
    </recommendedName>
</protein>
<comment type="subcellular location">
    <subcellularLocation>
        <location evidence="1">Cell membrane</location>
        <topology evidence="1">Lipid-anchor</topology>
    </subcellularLocation>
</comment>
<comment type="similarity">
    <text evidence="2">Belongs to the staphylococcal tandem lipoprotein family.</text>
</comment>
<evidence type="ECO:0000255" key="1">
    <source>
        <dbReference type="PROSITE-ProRule" id="PRU00303"/>
    </source>
</evidence>
<evidence type="ECO:0000305" key="2"/>
<feature type="signal peptide" evidence="1">
    <location>
        <begin position="1"/>
        <end position="22"/>
    </location>
</feature>
<feature type="chain" id="PRO_0000282181" description="Uncharacterized lipoprotein MW0399">
    <location>
        <begin position="23"/>
        <end position="263"/>
    </location>
</feature>
<feature type="lipid moiety-binding region" description="N-palmitoyl cysteine" evidence="1">
    <location>
        <position position="23"/>
    </location>
</feature>
<feature type="lipid moiety-binding region" description="S-diacylglycerol cysteine" evidence="1">
    <location>
        <position position="23"/>
    </location>
</feature>